<comment type="function">
    <text evidence="1">Involved in the biosynthesis of branched-chain amino acids (BCAA). Catalyzes an alkyl-migration followed by a ketol-acid reduction of (S)-2-acetolactate (S2AL) to yield (R)-2,3-dihydroxy-isovalerate. In the isomerase reaction, S2AL is rearranged via a Mg-dependent methyl migration to produce 3-hydroxy-3-methyl-2-ketobutyrate (HMKB). In the reductase reaction, this 2-ketoacid undergoes a metal-dependent reduction by NADPH to yield (R)-2,3-dihydroxy-isovalerate.</text>
</comment>
<comment type="catalytic activity">
    <reaction evidence="1">
        <text>(2R)-2,3-dihydroxy-3-methylbutanoate + NADP(+) = (2S)-2-acetolactate + NADPH + H(+)</text>
        <dbReference type="Rhea" id="RHEA:22068"/>
        <dbReference type="ChEBI" id="CHEBI:15378"/>
        <dbReference type="ChEBI" id="CHEBI:49072"/>
        <dbReference type="ChEBI" id="CHEBI:57783"/>
        <dbReference type="ChEBI" id="CHEBI:58349"/>
        <dbReference type="ChEBI" id="CHEBI:58476"/>
        <dbReference type="EC" id="1.1.1.86"/>
    </reaction>
</comment>
<comment type="catalytic activity">
    <reaction evidence="1">
        <text>(2R,3R)-2,3-dihydroxy-3-methylpentanoate + NADP(+) = (S)-2-ethyl-2-hydroxy-3-oxobutanoate + NADPH + H(+)</text>
        <dbReference type="Rhea" id="RHEA:13493"/>
        <dbReference type="ChEBI" id="CHEBI:15378"/>
        <dbReference type="ChEBI" id="CHEBI:49256"/>
        <dbReference type="ChEBI" id="CHEBI:49258"/>
        <dbReference type="ChEBI" id="CHEBI:57783"/>
        <dbReference type="ChEBI" id="CHEBI:58349"/>
        <dbReference type="EC" id="1.1.1.86"/>
    </reaction>
</comment>
<comment type="cofactor">
    <cofactor evidence="1">
        <name>Mg(2+)</name>
        <dbReference type="ChEBI" id="CHEBI:18420"/>
    </cofactor>
    <text evidence="1">Binds 2 magnesium ions per subunit.</text>
</comment>
<comment type="pathway">
    <text evidence="1">Amino-acid biosynthesis; L-isoleucine biosynthesis; L-isoleucine from 2-oxobutanoate: step 2/4.</text>
</comment>
<comment type="pathway">
    <text evidence="1">Amino-acid biosynthesis; L-valine biosynthesis; L-valine from pyruvate: step 2/4.</text>
</comment>
<comment type="similarity">
    <text evidence="1">Belongs to the ketol-acid reductoisomerase family.</text>
</comment>
<gene>
    <name evidence="1" type="primary">ilvC</name>
    <name type="ordered locus">Tery_4335</name>
</gene>
<keyword id="KW-0028">Amino-acid biosynthesis</keyword>
<keyword id="KW-0100">Branched-chain amino acid biosynthesis</keyword>
<keyword id="KW-0460">Magnesium</keyword>
<keyword id="KW-0479">Metal-binding</keyword>
<keyword id="KW-0521">NADP</keyword>
<keyword id="KW-0560">Oxidoreductase</keyword>
<evidence type="ECO:0000255" key="1">
    <source>
        <dbReference type="HAMAP-Rule" id="MF_00435"/>
    </source>
</evidence>
<evidence type="ECO:0000255" key="2">
    <source>
        <dbReference type="PROSITE-ProRule" id="PRU01197"/>
    </source>
</evidence>
<evidence type="ECO:0000255" key="3">
    <source>
        <dbReference type="PROSITE-ProRule" id="PRU01198"/>
    </source>
</evidence>
<protein>
    <recommendedName>
        <fullName evidence="1">Ketol-acid reductoisomerase (NADP(+))</fullName>
        <shortName evidence="1">KARI</shortName>
        <ecNumber evidence="1">1.1.1.86</ecNumber>
    </recommendedName>
    <alternativeName>
        <fullName evidence="1">Acetohydroxy-acid isomeroreductase</fullName>
        <shortName evidence="1">AHIR</shortName>
    </alternativeName>
    <alternativeName>
        <fullName evidence="1">Alpha-keto-beta-hydroxylacyl reductoisomerase</fullName>
    </alternativeName>
    <alternativeName>
        <fullName evidence="1">Ketol-acid reductoisomerase type 1</fullName>
    </alternativeName>
    <alternativeName>
        <fullName evidence="1">Ketol-acid reductoisomerase type I</fullName>
    </alternativeName>
</protein>
<organism>
    <name type="scientific">Trichodesmium erythraeum (strain IMS101)</name>
    <dbReference type="NCBI Taxonomy" id="203124"/>
    <lineage>
        <taxon>Bacteria</taxon>
        <taxon>Bacillati</taxon>
        <taxon>Cyanobacteriota</taxon>
        <taxon>Cyanophyceae</taxon>
        <taxon>Oscillatoriophycideae</taxon>
        <taxon>Oscillatoriales</taxon>
        <taxon>Microcoleaceae</taxon>
        <taxon>Trichodesmium</taxon>
    </lineage>
</organism>
<proteinExistence type="inferred from homology"/>
<sequence length="331" mass="36437">MARMYYDSDANLDILNDKTIAIIGYGSQGHAHALNLKDSGSKVIVGLYSGSKSATKAKDAGLDVYPVDEAAEKADLIMILLPDEVQKTVYKNQIEPHLKEGKILAFAHGFNIHFGQIIPPENVDVVMVAPKGPGHLVRRTYEQGEGVPCLFAIFQDASGQGRDRAMAYAKGIGGTRAGILETTFREETETDLFGEQVVLCGGLSALIKAGFETLVKAGYQPELAYFECLHEVKLIVDLVVEGGLANMRDSISNTAEFGDYTRGPRIVTDETRAQMQKILSEIQSGQFAREFVMENQTGKPVFTAMRRQEAEHSIEEVGKDLRAMFSWLKKR</sequence>
<name>ILVC_TRIEI</name>
<dbReference type="EC" id="1.1.1.86" evidence="1"/>
<dbReference type="EMBL" id="CP000393">
    <property type="protein sequence ID" value="ABG53327.1"/>
    <property type="molecule type" value="Genomic_DNA"/>
</dbReference>
<dbReference type="RefSeq" id="WP_011613653.1">
    <property type="nucleotide sequence ID" value="NC_008312.1"/>
</dbReference>
<dbReference type="SMR" id="Q10WP7"/>
<dbReference type="STRING" id="203124.Tery_4335"/>
<dbReference type="KEGG" id="ter:Tery_4335"/>
<dbReference type="eggNOG" id="COG0059">
    <property type="taxonomic scope" value="Bacteria"/>
</dbReference>
<dbReference type="HOGENOM" id="CLU_033821_0_1_3"/>
<dbReference type="OrthoDB" id="9804088at2"/>
<dbReference type="UniPathway" id="UPA00047">
    <property type="reaction ID" value="UER00056"/>
</dbReference>
<dbReference type="UniPathway" id="UPA00049">
    <property type="reaction ID" value="UER00060"/>
</dbReference>
<dbReference type="GO" id="GO:0005829">
    <property type="term" value="C:cytosol"/>
    <property type="evidence" value="ECO:0007669"/>
    <property type="project" value="TreeGrafter"/>
</dbReference>
<dbReference type="GO" id="GO:0004455">
    <property type="term" value="F:ketol-acid reductoisomerase activity"/>
    <property type="evidence" value="ECO:0007669"/>
    <property type="project" value="UniProtKB-UniRule"/>
</dbReference>
<dbReference type="GO" id="GO:0000287">
    <property type="term" value="F:magnesium ion binding"/>
    <property type="evidence" value="ECO:0007669"/>
    <property type="project" value="UniProtKB-UniRule"/>
</dbReference>
<dbReference type="GO" id="GO:0050661">
    <property type="term" value="F:NADP binding"/>
    <property type="evidence" value="ECO:0007669"/>
    <property type="project" value="InterPro"/>
</dbReference>
<dbReference type="GO" id="GO:0009097">
    <property type="term" value="P:isoleucine biosynthetic process"/>
    <property type="evidence" value="ECO:0007669"/>
    <property type="project" value="UniProtKB-UniRule"/>
</dbReference>
<dbReference type="GO" id="GO:0009099">
    <property type="term" value="P:L-valine biosynthetic process"/>
    <property type="evidence" value="ECO:0007669"/>
    <property type="project" value="UniProtKB-UniRule"/>
</dbReference>
<dbReference type="FunFam" id="3.40.50.720:FF:000023">
    <property type="entry name" value="Ketol-acid reductoisomerase (NADP(+))"/>
    <property type="match status" value="1"/>
</dbReference>
<dbReference type="Gene3D" id="6.10.240.10">
    <property type="match status" value="1"/>
</dbReference>
<dbReference type="Gene3D" id="3.40.50.720">
    <property type="entry name" value="NAD(P)-binding Rossmann-like Domain"/>
    <property type="match status" value="1"/>
</dbReference>
<dbReference type="HAMAP" id="MF_00435">
    <property type="entry name" value="IlvC"/>
    <property type="match status" value="1"/>
</dbReference>
<dbReference type="InterPro" id="IPR008927">
    <property type="entry name" value="6-PGluconate_DH-like_C_sf"/>
</dbReference>
<dbReference type="InterPro" id="IPR013023">
    <property type="entry name" value="KARI"/>
</dbReference>
<dbReference type="InterPro" id="IPR000506">
    <property type="entry name" value="KARI_C"/>
</dbReference>
<dbReference type="InterPro" id="IPR013116">
    <property type="entry name" value="KARI_N"/>
</dbReference>
<dbReference type="InterPro" id="IPR014359">
    <property type="entry name" value="KARI_prok"/>
</dbReference>
<dbReference type="InterPro" id="IPR036291">
    <property type="entry name" value="NAD(P)-bd_dom_sf"/>
</dbReference>
<dbReference type="NCBIfam" id="TIGR00465">
    <property type="entry name" value="ilvC"/>
    <property type="match status" value="1"/>
</dbReference>
<dbReference type="NCBIfam" id="NF004017">
    <property type="entry name" value="PRK05479.1"/>
    <property type="match status" value="1"/>
</dbReference>
<dbReference type="NCBIfam" id="NF009940">
    <property type="entry name" value="PRK13403.1"/>
    <property type="match status" value="1"/>
</dbReference>
<dbReference type="PANTHER" id="PTHR21371">
    <property type="entry name" value="KETOL-ACID REDUCTOISOMERASE, MITOCHONDRIAL"/>
    <property type="match status" value="1"/>
</dbReference>
<dbReference type="PANTHER" id="PTHR21371:SF1">
    <property type="entry name" value="KETOL-ACID REDUCTOISOMERASE, MITOCHONDRIAL"/>
    <property type="match status" value="1"/>
</dbReference>
<dbReference type="Pfam" id="PF01450">
    <property type="entry name" value="KARI_C"/>
    <property type="match status" value="1"/>
</dbReference>
<dbReference type="Pfam" id="PF07991">
    <property type="entry name" value="KARI_N"/>
    <property type="match status" value="1"/>
</dbReference>
<dbReference type="PIRSF" id="PIRSF000116">
    <property type="entry name" value="IlvC_gammaproteo"/>
    <property type="match status" value="1"/>
</dbReference>
<dbReference type="SUPFAM" id="SSF48179">
    <property type="entry name" value="6-phosphogluconate dehydrogenase C-terminal domain-like"/>
    <property type="match status" value="1"/>
</dbReference>
<dbReference type="SUPFAM" id="SSF51735">
    <property type="entry name" value="NAD(P)-binding Rossmann-fold domains"/>
    <property type="match status" value="1"/>
</dbReference>
<dbReference type="PROSITE" id="PS51851">
    <property type="entry name" value="KARI_C"/>
    <property type="match status" value="1"/>
</dbReference>
<dbReference type="PROSITE" id="PS51850">
    <property type="entry name" value="KARI_N"/>
    <property type="match status" value="1"/>
</dbReference>
<reference key="1">
    <citation type="journal article" date="2015" name="Proc. Natl. Acad. Sci. U.S.A.">
        <title>Trichodesmium genome maintains abundant, widespread noncoding DNA in situ, despite oligotrophic lifestyle.</title>
        <authorList>
            <person name="Walworth N."/>
            <person name="Pfreundt U."/>
            <person name="Nelson W.C."/>
            <person name="Mincer T."/>
            <person name="Heidelberg J.F."/>
            <person name="Fu F."/>
            <person name="Waterbury J.B."/>
            <person name="Glavina del Rio T."/>
            <person name="Goodwin L."/>
            <person name="Kyrpides N.C."/>
            <person name="Land M.L."/>
            <person name="Woyke T."/>
            <person name="Hutchins D.A."/>
            <person name="Hess W.R."/>
            <person name="Webb E.A."/>
        </authorList>
    </citation>
    <scope>NUCLEOTIDE SEQUENCE [LARGE SCALE GENOMIC DNA]</scope>
    <source>
        <strain>IMS101</strain>
    </source>
</reference>
<accession>Q10WP7</accession>
<feature type="chain" id="PRO_1000050588" description="Ketol-acid reductoisomerase (NADP(+))">
    <location>
        <begin position="1"/>
        <end position="331"/>
    </location>
</feature>
<feature type="domain" description="KARI N-terminal Rossmann" evidence="2">
    <location>
        <begin position="2"/>
        <end position="182"/>
    </location>
</feature>
<feature type="domain" description="KARI C-terminal knotted" evidence="3">
    <location>
        <begin position="183"/>
        <end position="328"/>
    </location>
</feature>
<feature type="active site" evidence="1">
    <location>
        <position position="108"/>
    </location>
</feature>
<feature type="binding site" evidence="1">
    <location>
        <begin position="25"/>
        <end position="28"/>
    </location>
    <ligand>
        <name>NADP(+)</name>
        <dbReference type="ChEBI" id="CHEBI:58349"/>
    </ligand>
</feature>
<feature type="binding site" evidence="1">
    <location>
        <position position="51"/>
    </location>
    <ligand>
        <name>NADP(+)</name>
        <dbReference type="ChEBI" id="CHEBI:58349"/>
    </ligand>
</feature>
<feature type="binding site" evidence="1">
    <location>
        <position position="53"/>
    </location>
    <ligand>
        <name>NADP(+)</name>
        <dbReference type="ChEBI" id="CHEBI:58349"/>
    </ligand>
</feature>
<feature type="binding site" evidence="1">
    <location>
        <begin position="83"/>
        <end position="86"/>
    </location>
    <ligand>
        <name>NADP(+)</name>
        <dbReference type="ChEBI" id="CHEBI:58349"/>
    </ligand>
</feature>
<feature type="binding site" evidence="1">
    <location>
        <position position="134"/>
    </location>
    <ligand>
        <name>NADP(+)</name>
        <dbReference type="ChEBI" id="CHEBI:58349"/>
    </ligand>
</feature>
<feature type="binding site" evidence="1">
    <location>
        <position position="191"/>
    </location>
    <ligand>
        <name>Mg(2+)</name>
        <dbReference type="ChEBI" id="CHEBI:18420"/>
        <label>1</label>
    </ligand>
</feature>
<feature type="binding site" evidence="1">
    <location>
        <position position="191"/>
    </location>
    <ligand>
        <name>Mg(2+)</name>
        <dbReference type="ChEBI" id="CHEBI:18420"/>
        <label>2</label>
    </ligand>
</feature>
<feature type="binding site" evidence="1">
    <location>
        <position position="195"/>
    </location>
    <ligand>
        <name>Mg(2+)</name>
        <dbReference type="ChEBI" id="CHEBI:18420"/>
        <label>1</label>
    </ligand>
</feature>
<feature type="binding site" evidence="1">
    <location>
        <position position="227"/>
    </location>
    <ligand>
        <name>Mg(2+)</name>
        <dbReference type="ChEBI" id="CHEBI:18420"/>
        <label>2</label>
    </ligand>
</feature>
<feature type="binding site" evidence="1">
    <location>
        <position position="231"/>
    </location>
    <ligand>
        <name>Mg(2+)</name>
        <dbReference type="ChEBI" id="CHEBI:18420"/>
        <label>2</label>
    </ligand>
</feature>
<feature type="binding site" evidence="1">
    <location>
        <position position="252"/>
    </location>
    <ligand>
        <name>substrate</name>
    </ligand>
</feature>